<feature type="chain" id="PRO_0000373617" description="Transmembrane protein C257L">
    <location>
        <begin position="1"/>
        <end position="257"/>
    </location>
</feature>
<feature type="transmembrane region" description="Helical" evidence="2">
    <location>
        <begin position="123"/>
        <end position="143"/>
    </location>
</feature>
<feature type="transmembrane region" description="Helical" evidence="2">
    <location>
        <begin position="163"/>
        <end position="183"/>
    </location>
</feature>
<evidence type="ECO:0000250" key="1">
    <source>
        <dbReference type="UniProtKB" id="Q65158"/>
    </source>
</evidence>
<evidence type="ECO:0000255" key="2"/>
<evidence type="ECO:0000305" key="3"/>
<name>VF257_ASFP4</name>
<gene>
    <name type="ordered locus">Pret-078</name>
</gene>
<organism>
    <name type="scientific">African swine fever virus (isolate Tick/South Africa/Pretoriuskop Pr4/1996)</name>
    <name type="common">ASFV</name>
    <dbReference type="NCBI Taxonomy" id="561443"/>
    <lineage>
        <taxon>Viruses</taxon>
        <taxon>Varidnaviria</taxon>
        <taxon>Bamfordvirae</taxon>
        <taxon>Nucleocytoviricota</taxon>
        <taxon>Pokkesviricetes</taxon>
        <taxon>Asfuvirales</taxon>
        <taxon>Asfarviridae</taxon>
        <taxon>Asfivirus</taxon>
        <taxon>African swine fever virus</taxon>
    </lineage>
</organism>
<proteinExistence type="inferred from homology"/>
<sequence length="257" mass="29804">MYSVCDVVRDAVAQSHLCACPNDKLPQCKGVTKAPPECSVFHVAKLQDTKFKWKYTLDPLKAQKLNQINKDIEKDAITLKLLYGIELSPEDLEWWKMQRCLINKKTGAKGGQFANKYLERQDLELLGYSPTPIIGGDFMFTALPDKVLRTIPIAWDRFLNPAMMIFFLIILLCVILGIFYVLVRNTLRRKQKIKQHQMEIKRFIKEKEQDPYIHTSFESWPADPNKEWKELIPVYEAQGYCMADYRKKLGMPPGPNC</sequence>
<reference key="1">
    <citation type="submission" date="2003-03" db="EMBL/GenBank/DDBJ databases">
        <title>African swine fever virus genomes.</title>
        <authorList>
            <person name="Kutish G.F."/>
            <person name="Rock D.L."/>
        </authorList>
    </citation>
    <scope>NUCLEOTIDE SEQUENCE [LARGE SCALE GENOMIC DNA]</scope>
</reference>
<keyword id="KW-1043">Host membrane</keyword>
<keyword id="KW-0426">Late protein</keyword>
<keyword id="KW-0472">Membrane</keyword>
<keyword id="KW-0812">Transmembrane</keyword>
<keyword id="KW-1133">Transmembrane helix</keyword>
<keyword id="KW-0946">Virion</keyword>
<organismHost>
    <name type="scientific">Ornithodoros</name>
    <name type="common">relapsing fever ticks</name>
    <dbReference type="NCBI Taxonomy" id="6937"/>
</organismHost>
<organismHost>
    <name type="scientific">Phacochoerus aethiopicus</name>
    <name type="common">Warthog</name>
    <dbReference type="NCBI Taxonomy" id="85517"/>
</organismHost>
<organismHost>
    <name type="scientific">Phacochoerus africanus</name>
    <name type="common">Warthog</name>
    <dbReference type="NCBI Taxonomy" id="41426"/>
</organismHost>
<organismHost>
    <name type="scientific">Potamochoerus larvatus</name>
    <name type="common">Bushpig</name>
    <dbReference type="NCBI Taxonomy" id="273792"/>
</organismHost>
<organismHost>
    <name type="scientific">Sus scrofa</name>
    <name type="common">Pig</name>
    <dbReference type="NCBI Taxonomy" id="9823"/>
</organismHost>
<comment type="subcellular location">
    <subcellularLocation>
        <location evidence="3">Host membrane</location>
        <topology evidence="3">Multi-pass membrane protein</topology>
    </subcellularLocation>
    <subcellularLocation>
        <location evidence="1">Virion</location>
    </subcellularLocation>
</comment>
<comment type="induction">
    <text evidence="1">Expressed in the late phase of the viral replicative cycle.</text>
</comment>
<comment type="similarity">
    <text evidence="3">Belongs to the asfivirus C257R family.</text>
</comment>
<accession>P0CAB9</accession>
<protein>
    <recommendedName>
        <fullName>Transmembrane protein C257L</fullName>
        <shortName>pC257L</shortName>
    </recommendedName>
</protein>
<dbReference type="EMBL" id="AY261363">
    <property type="status" value="NOT_ANNOTATED_CDS"/>
    <property type="molecule type" value="Genomic_DNA"/>
</dbReference>
<dbReference type="SMR" id="P0CAB9"/>
<dbReference type="Proteomes" id="UP000000859">
    <property type="component" value="Segment"/>
</dbReference>
<dbReference type="GO" id="GO:0033644">
    <property type="term" value="C:host cell membrane"/>
    <property type="evidence" value="ECO:0007669"/>
    <property type="project" value="UniProtKB-SubCell"/>
</dbReference>
<dbReference type="GO" id="GO:0016020">
    <property type="term" value="C:membrane"/>
    <property type="evidence" value="ECO:0007669"/>
    <property type="project" value="UniProtKB-KW"/>
</dbReference>
<dbReference type="GO" id="GO:0044423">
    <property type="term" value="C:virion component"/>
    <property type="evidence" value="ECO:0007669"/>
    <property type="project" value="UniProtKB-KW"/>
</dbReference>